<dbReference type="EC" id="1.6.5.-" evidence="1"/>
<dbReference type="EC" id="1.7.1.17" evidence="1"/>
<dbReference type="EMBL" id="AE017263">
    <property type="protein sequence ID" value="AAT75408.1"/>
    <property type="molecule type" value="Genomic_DNA"/>
</dbReference>
<dbReference type="RefSeq" id="WP_011182949.1">
    <property type="nucleotide sequence ID" value="NC_006055.1"/>
</dbReference>
<dbReference type="RefSeq" id="YP_053292.1">
    <property type="nucleotide sequence ID" value="NC_006055.1"/>
</dbReference>
<dbReference type="SMR" id="Q6F265"/>
<dbReference type="STRING" id="265311.Mfl052"/>
<dbReference type="PaxDb" id="265311-Mfl052"/>
<dbReference type="EnsemblBacteria" id="AAT75408">
    <property type="protein sequence ID" value="AAT75408"/>
    <property type="gene ID" value="Mfl052"/>
</dbReference>
<dbReference type="GeneID" id="2897815"/>
<dbReference type="KEGG" id="mfl:Mfl052"/>
<dbReference type="PATRIC" id="fig|265311.5.peg.52"/>
<dbReference type="eggNOG" id="COG1182">
    <property type="taxonomic scope" value="Bacteria"/>
</dbReference>
<dbReference type="HOGENOM" id="CLU_088964_2_0_14"/>
<dbReference type="OrthoDB" id="9805013at2"/>
<dbReference type="Proteomes" id="UP000006647">
    <property type="component" value="Chromosome"/>
</dbReference>
<dbReference type="GO" id="GO:0009055">
    <property type="term" value="F:electron transfer activity"/>
    <property type="evidence" value="ECO:0007669"/>
    <property type="project" value="UniProtKB-UniRule"/>
</dbReference>
<dbReference type="GO" id="GO:0010181">
    <property type="term" value="F:FMN binding"/>
    <property type="evidence" value="ECO:0007669"/>
    <property type="project" value="UniProtKB-UniRule"/>
</dbReference>
<dbReference type="GO" id="GO:0016652">
    <property type="term" value="F:oxidoreductase activity, acting on NAD(P)H as acceptor"/>
    <property type="evidence" value="ECO:0007669"/>
    <property type="project" value="UniProtKB-UniRule"/>
</dbReference>
<dbReference type="GO" id="GO:0016655">
    <property type="term" value="F:oxidoreductase activity, acting on NAD(P)H, quinone or similar compound as acceptor"/>
    <property type="evidence" value="ECO:0007669"/>
    <property type="project" value="InterPro"/>
</dbReference>
<dbReference type="Gene3D" id="3.40.50.360">
    <property type="match status" value="1"/>
</dbReference>
<dbReference type="HAMAP" id="MF_01216">
    <property type="entry name" value="Azoreductase_type1"/>
    <property type="match status" value="1"/>
</dbReference>
<dbReference type="InterPro" id="IPR003680">
    <property type="entry name" value="Flavodoxin_fold"/>
</dbReference>
<dbReference type="InterPro" id="IPR029039">
    <property type="entry name" value="Flavoprotein-like_sf"/>
</dbReference>
<dbReference type="InterPro" id="IPR050104">
    <property type="entry name" value="FMN-dep_NADH:Q_OxRdtase_AzoR1"/>
</dbReference>
<dbReference type="InterPro" id="IPR023048">
    <property type="entry name" value="NADH:quinone_OxRdtase_FMN_depd"/>
</dbReference>
<dbReference type="NCBIfam" id="NF002370">
    <property type="entry name" value="PRK01355.1"/>
    <property type="match status" value="1"/>
</dbReference>
<dbReference type="PANTHER" id="PTHR43741">
    <property type="entry name" value="FMN-DEPENDENT NADH-AZOREDUCTASE 1"/>
    <property type="match status" value="1"/>
</dbReference>
<dbReference type="PANTHER" id="PTHR43741:SF4">
    <property type="entry name" value="FMN-DEPENDENT NADH:QUINONE OXIDOREDUCTASE"/>
    <property type="match status" value="1"/>
</dbReference>
<dbReference type="Pfam" id="PF02525">
    <property type="entry name" value="Flavodoxin_2"/>
    <property type="match status" value="1"/>
</dbReference>
<dbReference type="SUPFAM" id="SSF52218">
    <property type="entry name" value="Flavoproteins"/>
    <property type="match status" value="1"/>
</dbReference>
<keyword id="KW-0285">Flavoprotein</keyword>
<keyword id="KW-0288">FMN</keyword>
<keyword id="KW-0520">NAD</keyword>
<keyword id="KW-0560">Oxidoreductase</keyword>
<keyword id="KW-1185">Reference proteome</keyword>
<name>AZOR2_MESFL</name>
<gene>
    <name evidence="1" type="primary">azoR2</name>
    <name type="ordered locus">Mfl052</name>
</gene>
<proteinExistence type="inferred from homology"/>
<sequence length="199" mass="22498">MKKVLVINSSVSQLNNSDSLAMSNMFIEEYKKMNPNDEIINLDLNETKMSQKTLTRNNIAEYFNQEDSFDFIEQLKSVDKIVLNFSMVNWGIPAILKNYIDHITIANLTFTYKGSTDGNAIGLLSNIQDVQILATKGGTGTPNSAFTEYVKNIWEFLGAKVKSEIIINEMMDIPPYAEQSPIENLEKVKEQILKAAKNF</sequence>
<protein>
    <recommendedName>
        <fullName evidence="1">FMN-dependent NADH:quinone oxidoreductase 2</fullName>
        <ecNumber evidence="1">1.6.5.-</ecNumber>
    </recommendedName>
    <alternativeName>
        <fullName evidence="1">Azo-dye reductase 2</fullName>
    </alternativeName>
    <alternativeName>
        <fullName evidence="1">FMN-dependent NADH-azo compound oxidoreductase 2</fullName>
    </alternativeName>
    <alternativeName>
        <fullName evidence="1">FMN-dependent NADH-azoreductase 2</fullName>
        <ecNumber evidence="1">1.7.1.17</ecNumber>
    </alternativeName>
</protein>
<accession>Q6F265</accession>
<feature type="chain" id="PRO_0000245930" description="FMN-dependent NADH:quinone oxidoreductase 2">
    <location>
        <begin position="1"/>
        <end position="199"/>
    </location>
</feature>
<feature type="binding site" evidence="1">
    <location>
        <position position="10"/>
    </location>
    <ligand>
        <name>FMN</name>
        <dbReference type="ChEBI" id="CHEBI:58210"/>
    </ligand>
</feature>
<feature type="binding site" evidence="1">
    <location>
        <begin position="17"/>
        <end position="19"/>
    </location>
    <ligand>
        <name>FMN</name>
        <dbReference type="ChEBI" id="CHEBI:58210"/>
    </ligand>
</feature>
<feature type="binding site" evidence="1">
    <location>
        <begin position="135"/>
        <end position="138"/>
    </location>
    <ligand>
        <name>FMN</name>
        <dbReference type="ChEBI" id="CHEBI:58210"/>
    </ligand>
</feature>
<organism>
    <name type="scientific">Mesoplasma florum (strain ATCC 33453 / NBRC 100688 / NCTC 11704 / L1)</name>
    <name type="common">Acholeplasma florum</name>
    <dbReference type="NCBI Taxonomy" id="265311"/>
    <lineage>
        <taxon>Bacteria</taxon>
        <taxon>Bacillati</taxon>
        <taxon>Mycoplasmatota</taxon>
        <taxon>Mollicutes</taxon>
        <taxon>Entomoplasmatales</taxon>
        <taxon>Entomoplasmataceae</taxon>
        <taxon>Mesoplasma</taxon>
    </lineage>
</organism>
<comment type="function">
    <text evidence="1">Quinone reductase that provides resistance to thiol-specific stress caused by electrophilic quinones.</text>
</comment>
<comment type="function">
    <text evidence="1">Also exhibits azoreductase activity. Catalyzes the reductive cleavage of the azo bond in aromatic azo compounds to the corresponding amines.</text>
</comment>
<comment type="catalytic activity">
    <reaction evidence="1">
        <text>2 a quinone + NADH + H(+) = 2 a 1,4-benzosemiquinone + NAD(+)</text>
        <dbReference type="Rhea" id="RHEA:65952"/>
        <dbReference type="ChEBI" id="CHEBI:15378"/>
        <dbReference type="ChEBI" id="CHEBI:57540"/>
        <dbReference type="ChEBI" id="CHEBI:57945"/>
        <dbReference type="ChEBI" id="CHEBI:132124"/>
        <dbReference type="ChEBI" id="CHEBI:134225"/>
    </reaction>
</comment>
<comment type="catalytic activity">
    <reaction evidence="1">
        <text>N,N-dimethyl-1,4-phenylenediamine + anthranilate + 2 NAD(+) = 2-(4-dimethylaminophenyl)diazenylbenzoate + 2 NADH + 2 H(+)</text>
        <dbReference type="Rhea" id="RHEA:55872"/>
        <dbReference type="ChEBI" id="CHEBI:15378"/>
        <dbReference type="ChEBI" id="CHEBI:15783"/>
        <dbReference type="ChEBI" id="CHEBI:16567"/>
        <dbReference type="ChEBI" id="CHEBI:57540"/>
        <dbReference type="ChEBI" id="CHEBI:57945"/>
        <dbReference type="ChEBI" id="CHEBI:71579"/>
        <dbReference type="EC" id="1.7.1.17"/>
    </reaction>
</comment>
<comment type="cofactor">
    <cofactor evidence="1">
        <name>FMN</name>
        <dbReference type="ChEBI" id="CHEBI:58210"/>
    </cofactor>
    <text evidence="1">Binds 1 FMN per subunit.</text>
</comment>
<comment type="subunit">
    <text evidence="1">Homodimer.</text>
</comment>
<comment type="similarity">
    <text evidence="1">Belongs to the azoreductase type 1 family.</text>
</comment>
<evidence type="ECO:0000255" key="1">
    <source>
        <dbReference type="HAMAP-Rule" id="MF_01216"/>
    </source>
</evidence>
<reference key="1">
    <citation type="submission" date="2004-06" db="EMBL/GenBank/DDBJ databases">
        <authorList>
            <person name="Birren B.W."/>
            <person name="Stange-Thomann N."/>
            <person name="Hafez N."/>
            <person name="DeCaprio D."/>
            <person name="Fisher S."/>
            <person name="Butler J."/>
            <person name="Elkins T."/>
            <person name="Kodira C.D."/>
            <person name="Major J."/>
            <person name="Wang S."/>
            <person name="Nicol R."/>
            <person name="Nusbaum C."/>
        </authorList>
    </citation>
    <scope>NUCLEOTIDE SEQUENCE [LARGE SCALE GENOMIC DNA]</scope>
    <source>
        <strain>ATCC 33453 / NBRC 100688 / NCTC 11704 / L1</strain>
    </source>
</reference>